<dbReference type="EMBL" id="AE005174">
    <property type="protein sequence ID" value="AAG55178.1"/>
    <property type="status" value="ALT_INIT"/>
    <property type="molecule type" value="Genomic_DNA"/>
</dbReference>
<dbReference type="EMBL" id="BA000007">
    <property type="protein sequence ID" value="BAB34307.2"/>
    <property type="molecule type" value="Genomic_DNA"/>
</dbReference>
<dbReference type="PIR" id="D90739">
    <property type="entry name" value="D90739"/>
</dbReference>
<dbReference type="PIR" id="F85589">
    <property type="entry name" value="F85589"/>
</dbReference>
<dbReference type="RefSeq" id="NP_308911.1">
    <property type="nucleotide sequence ID" value="NC_002695.1"/>
</dbReference>
<dbReference type="RefSeq" id="WP_000710619.1">
    <property type="nucleotide sequence ID" value="NZ_VOAI01000006.1"/>
</dbReference>
<dbReference type="STRING" id="155864.Z1027"/>
<dbReference type="GeneID" id="917622"/>
<dbReference type="GeneID" id="93776622"/>
<dbReference type="KEGG" id="ece:Z1027"/>
<dbReference type="KEGG" id="ecs:ECs_0884"/>
<dbReference type="PATRIC" id="fig|386585.9.peg.998"/>
<dbReference type="eggNOG" id="ENOG503333J">
    <property type="taxonomic scope" value="Bacteria"/>
</dbReference>
<dbReference type="HOGENOM" id="CLU_2023628_0_0_6"/>
<dbReference type="OMA" id="IAWRVNA"/>
<dbReference type="Proteomes" id="UP000000558">
    <property type="component" value="Chromosome"/>
</dbReference>
<dbReference type="Proteomes" id="UP000002519">
    <property type="component" value="Chromosome"/>
</dbReference>
<dbReference type="GO" id="GO:0042597">
    <property type="term" value="C:periplasmic space"/>
    <property type="evidence" value="ECO:0007669"/>
    <property type="project" value="UniProtKB-SubCell"/>
</dbReference>
<dbReference type="FunFam" id="3.30.1660.10:FF:000001">
    <property type="entry name" value="Multiple stress resistance protein BhsA"/>
    <property type="match status" value="1"/>
</dbReference>
<dbReference type="Gene3D" id="3.30.1660.10">
    <property type="entry name" value="Flavin-binding protein dodecin"/>
    <property type="match status" value="1"/>
</dbReference>
<dbReference type="InterPro" id="IPR051096">
    <property type="entry name" value="BhsA/McbA_stress_biofilm_assoc"/>
</dbReference>
<dbReference type="InterPro" id="IPR025543">
    <property type="entry name" value="Dodecin-like"/>
</dbReference>
<dbReference type="InterPro" id="IPR036275">
    <property type="entry name" value="YdgH-like_sf"/>
</dbReference>
<dbReference type="InterPro" id="IPR010854">
    <property type="entry name" value="YdgH/BhsA/McbA-like_dom"/>
</dbReference>
<dbReference type="NCBIfam" id="NF040473">
    <property type="entry name" value="peri_YbiM_McbA"/>
    <property type="match status" value="1"/>
</dbReference>
<dbReference type="NCBIfam" id="NF047859">
    <property type="entry name" value="StressCuResBhsA"/>
    <property type="match status" value="1"/>
</dbReference>
<dbReference type="PANTHER" id="PTHR34156">
    <property type="entry name" value="OUTER MEMBRANE PROTEIN-RELATED-RELATED"/>
    <property type="match status" value="1"/>
</dbReference>
<dbReference type="PANTHER" id="PTHR34156:SF1">
    <property type="entry name" value="PERIPLASMIC PROTEIN"/>
    <property type="match status" value="1"/>
</dbReference>
<dbReference type="Pfam" id="PF07338">
    <property type="entry name" value="YdgH_BhsA-like"/>
    <property type="match status" value="1"/>
</dbReference>
<dbReference type="SUPFAM" id="SSF159871">
    <property type="entry name" value="YdgH-like"/>
    <property type="match status" value="1"/>
</dbReference>
<proteinExistence type="inferred from homology"/>
<evidence type="ECO:0000250" key="1"/>
<evidence type="ECO:0000255" key="2"/>
<evidence type="ECO:0000305" key="3"/>
<name>MCBA_ECO57</name>
<accession>P0AAX7</accession>
<accession>P75781</accession>
<feature type="signal peptide" evidence="2">
    <location>
        <begin position="1"/>
        <end position="22"/>
    </location>
</feature>
<feature type="chain" id="PRO_0000168726" description="Uncharacterized protein McbA">
    <location>
        <begin position="23"/>
        <end position="86"/>
    </location>
</feature>
<keyword id="KW-0574">Periplasm</keyword>
<keyword id="KW-1185">Reference proteome</keyword>
<keyword id="KW-0732">Signal</keyword>
<comment type="function">
    <text evidence="1">Affects biofilm formation and mucoidy.</text>
</comment>
<comment type="subcellular location">
    <subcellularLocation>
        <location evidence="3">Periplasm</location>
    </subcellularLocation>
</comment>
<comment type="similarity">
    <text evidence="3">Belongs to the BhsA/McbA family.</text>
</comment>
<comment type="sequence caution" evidence="3">
    <conflict type="erroneous initiation">
        <sequence resource="EMBL-CDS" id="AAG55178"/>
    </conflict>
    <text>Extended N-terminus.</text>
</comment>
<protein>
    <recommendedName>
        <fullName>Uncharacterized protein McbA</fullName>
    </recommendedName>
</protein>
<gene>
    <name type="primary">mcbA</name>
    <name type="ordered locus">Z1027</name>
    <name type="ordered locus">ECs0884</name>
</gene>
<sequence length="86" mass="8896">MKKCLTLLIATVLSGISLTAYAAQPMSNLDSGQLRPAGTVSATGASNLSDLEDKLAEKAREQGAKGYVINSAGGNDQMFGTATIYK</sequence>
<organism>
    <name type="scientific">Escherichia coli O157:H7</name>
    <dbReference type="NCBI Taxonomy" id="83334"/>
    <lineage>
        <taxon>Bacteria</taxon>
        <taxon>Pseudomonadati</taxon>
        <taxon>Pseudomonadota</taxon>
        <taxon>Gammaproteobacteria</taxon>
        <taxon>Enterobacterales</taxon>
        <taxon>Enterobacteriaceae</taxon>
        <taxon>Escherichia</taxon>
    </lineage>
</organism>
<reference key="1">
    <citation type="journal article" date="2001" name="Nature">
        <title>Genome sequence of enterohaemorrhagic Escherichia coli O157:H7.</title>
        <authorList>
            <person name="Perna N.T."/>
            <person name="Plunkett G. III"/>
            <person name="Burland V."/>
            <person name="Mau B."/>
            <person name="Glasner J.D."/>
            <person name="Rose D.J."/>
            <person name="Mayhew G.F."/>
            <person name="Evans P.S."/>
            <person name="Gregor J."/>
            <person name="Kirkpatrick H.A."/>
            <person name="Posfai G."/>
            <person name="Hackett J."/>
            <person name="Klink S."/>
            <person name="Boutin A."/>
            <person name="Shao Y."/>
            <person name="Miller L."/>
            <person name="Grotbeck E.J."/>
            <person name="Davis N.W."/>
            <person name="Lim A."/>
            <person name="Dimalanta E.T."/>
            <person name="Potamousis K."/>
            <person name="Apodaca J."/>
            <person name="Anantharaman T.S."/>
            <person name="Lin J."/>
            <person name="Yen G."/>
            <person name="Schwartz D.C."/>
            <person name="Welch R.A."/>
            <person name="Blattner F.R."/>
        </authorList>
    </citation>
    <scope>NUCLEOTIDE SEQUENCE [LARGE SCALE GENOMIC DNA]</scope>
    <source>
        <strain>O157:H7 / EDL933 / ATCC 700927 / EHEC</strain>
    </source>
</reference>
<reference key="2">
    <citation type="journal article" date="2001" name="DNA Res.">
        <title>Complete genome sequence of enterohemorrhagic Escherichia coli O157:H7 and genomic comparison with a laboratory strain K-12.</title>
        <authorList>
            <person name="Hayashi T."/>
            <person name="Makino K."/>
            <person name="Ohnishi M."/>
            <person name="Kurokawa K."/>
            <person name="Ishii K."/>
            <person name="Yokoyama K."/>
            <person name="Han C.-G."/>
            <person name="Ohtsubo E."/>
            <person name="Nakayama K."/>
            <person name="Murata T."/>
            <person name="Tanaka M."/>
            <person name="Tobe T."/>
            <person name="Iida T."/>
            <person name="Takami H."/>
            <person name="Honda T."/>
            <person name="Sasakawa C."/>
            <person name="Ogasawara N."/>
            <person name="Yasunaga T."/>
            <person name="Kuhara S."/>
            <person name="Shiba T."/>
            <person name="Hattori M."/>
            <person name="Shinagawa H."/>
        </authorList>
    </citation>
    <scope>NUCLEOTIDE SEQUENCE [LARGE SCALE GENOMIC DNA]</scope>
    <source>
        <strain>O157:H7 / Sakai / RIMD 0509952 / EHEC</strain>
    </source>
</reference>